<organism>
    <name type="scientific">Homo sapiens</name>
    <name type="common">Human</name>
    <dbReference type="NCBI Taxonomy" id="9606"/>
    <lineage>
        <taxon>Eukaryota</taxon>
        <taxon>Metazoa</taxon>
        <taxon>Chordata</taxon>
        <taxon>Craniata</taxon>
        <taxon>Vertebrata</taxon>
        <taxon>Euteleostomi</taxon>
        <taxon>Mammalia</taxon>
        <taxon>Eutheria</taxon>
        <taxon>Euarchontoglires</taxon>
        <taxon>Primates</taxon>
        <taxon>Haplorrhini</taxon>
        <taxon>Catarrhini</taxon>
        <taxon>Hominidae</taxon>
        <taxon>Homo</taxon>
    </lineage>
</organism>
<dbReference type="EMBL" id="U61849">
    <property type="protein sequence ID" value="AAC50727.1"/>
    <property type="molecule type" value="mRNA"/>
</dbReference>
<dbReference type="EMBL" id="AK127335">
    <property type="protein sequence ID" value="BAG54485.1"/>
    <property type="molecule type" value="mRNA"/>
</dbReference>
<dbReference type="EMBL" id="BC089441">
    <property type="protein sequence ID" value="AAH89441.1"/>
    <property type="molecule type" value="mRNA"/>
</dbReference>
<dbReference type="CCDS" id="CCDS32762.1"/>
<dbReference type="RefSeq" id="NP_002513.2">
    <property type="nucleotide sequence ID" value="NM_002522.4"/>
</dbReference>
<dbReference type="PDB" id="6YPE">
    <property type="method" value="X-ray"/>
    <property type="resolution" value="1.45 A"/>
    <property type="chains" value="A/B=225-429"/>
</dbReference>
<dbReference type="PDBsum" id="6YPE"/>
<dbReference type="SMR" id="Q15818"/>
<dbReference type="BioGRID" id="110944">
    <property type="interactions" value="81"/>
</dbReference>
<dbReference type="FunCoup" id="Q15818">
    <property type="interactions" value="825"/>
</dbReference>
<dbReference type="IntAct" id="Q15818">
    <property type="interactions" value="67"/>
</dbReference>
<dbReference type="MINT" id="Q15818"/>
<dbReference type="STRING" id="9606.ENSP00000307549"/>
<dbReference type="TCDB" id="1.C.92.1.3">
    <property type="family name" value="the pentraxin (pentraxin) family"/>
</dbReference>
<dbReference type="UniLectin" id="Q15818"/>
<dbReference type="GlyCosmos" id="Q15818">
    <property type="glycosylation" value="2 sites, No reported glycans"/>
</dbReference>
<dbReference type="GlyGen" id="Q15818">
    <property type="glycosylation" value="3 sites, 1 N-linked glycan (2 sites)"/>
</dbReference>
<dbReference type="iPTMnet" id="Q15818"/>
<dbReference type="PhosphoSitePlus" id="Q15818"/>
<dbReference type="SwissPalm" id="Q15818"/>
<dbReference type="BioMuta" id="NPTX1"/>
<dbReference type="DMDM" id="77416871"/>
<dbReference type="jPOST" id="Q15818"/>
<dbReference type="MassIVE" id="Q15818"/>
<dbReference type="PaxDb" id="9606-ENSP00000307549"/>
<dbReference type="PeptideAtlas" id="Q15818"/>
<dbReference type="ProteomicsDB" id="60774"/>
<dbReference type="Pumba" id="Q15818"/>
<dbReference type="Antibodypedia" id="32766">
    <property type="antibodies" value="407 antibodies from 31 providers"/>
</dbReference>
<dbReference type="DNASU" id="4884"/>
<dbReference type="Ensembl" id="ENST00000306773.5">
    <property type="protein sequence ID" value="ENSP00000307549.4"/>
    <property type="gene ID" value="ENSG00000171246.7"/>
</dbReference>
<dbReference type="GeneID" id="4884"/>
<dbReference type="KEGG" id="hsa:4884"/>
<dbReference type="MANE-Select" id="ENST00000306773.5">
    <property type="protein sequence ID" value="ENSP00000307549.4"/>
    <property type="RefSeq nucleotide sequence ID" value="NM_002522.4"/>
    <property type="RefSeq protein sequence ID" value="NP_002513.2"/>
</dbReference>
<dbReference type="UCSC" id="uc002jyp.2">
    <property type="organism name" value="human"/>
</dbReference>
<dbReference type="AGR" id="HGNC:7952"/>
<dbReference type="CTD" id="4884"/>
<dbReference type="DisGeNET" id="4884"/>
<dbReference type="GeneCards" id="NPTX1"/>
<dbReference type="HGNC" id="HGNC:7952">
    <property type="gene designation" value="NPTX1"/>
</dbReference>
<dbReference type="HPA" id="ENSG00000171246">
    <property type="expression patterns" value="Tissue enriched (brain)"/>
</dbReference>
<dbReference type="MalaCards" id="NPTX1"/>
<dbReference type="MIM" id="602367">
    <property type="type" value="gene"/>
</dbReference>
<dbReference type="MIM" id="620158">
    <property type="type" value="phenotype"/>
</dbReference>
<dbReference type="neXtProt" id="NX_Q15818"/>
<dbReference type="OpenTargets" id="ENSG00000171246"/>
<dbReference type="PharmGKB" id="PA31738"/>
<dbReference type="VEuPathDB" id="HostDB:ENSG00000171246"/>
<dbReference type="eggNOG" id="ENOG502QTID">
    <property type="taxonomic scope" value="Eukaryota"/>
</dbReference>
<dbReference type="GeneTree" id="ENSGT01060000248591"/>
<dbReference type="HOGENOM" id="CLU_032051_0_0_1"/>
<dbReference type="InParanoid" id="Q15818"/>
<dbReference type="OMA" id="GDMCAAT"/>
<dbReference type="OrthoDB" id="8871962at2759"/>
<dbReference type="PAN-GO" id="Q15818">
    <property type="GO annotations" value="3 GO annotations based on evolutionary models"/>
</dbReference>
<dbReference type="PhylomeDB" id="Q15818"/>
<dbReference type="TreeFam" id="TF330208"/>
<dbReference type="PathwayCommons" id="Q15818"/>
<dbReference type="SignaLink" id="Q15818"/>
<dbReference type="SIGNOR" id="Q15818"/>
<dbReference type="BioGRID-ORCS" id="4884">
    <property type="hits" value="11 hits in 1152 CRISPR screens"/>
</dbReference>
<dbReference type="CD-CODE" id="FB4E32DD">
    <property type="entry name" value="Presynaptic clusters and postsynaptic densities"/>
</dbReference>
<dbReference type="ChiTaRS" id="NPTX1">
    <property type="organism name" value="human"/>
</dbReference>
<dbReference type="GeneWiki" id="NPTX1"/>
<dbReference type="GenomeRNAi" id="4884"/>
<dbReference type="Pharos" id="Q15818">
    <property type="development level" value="Tbio"/>
</dbReference>
<dbReference type="PRO" id="PR:Q15818"/>
<dbReference type="Proteomes" id="UP000005640">
    <property type="component" value="Chromosome 17"/>
</dbReference>
<dbReference type="RNAct" id="Q15818">
    <property type="molecule type" value="protein"/>
</dbReference>
<dbReference type="Bgee" id="ENSG00000171246">
    <property type="expression patterns" value="Expressed in cerebellar vermis and 162 other cell types or tissues"/>
</dbReference>
<dbReference type="GO" id="GO:0005783">
    <property type="term" value="C:endoplasmic reticulum"/>
    <property type="evidence" value="ECO:0007669"/>
    <property type="project" value="UniProtKB-SubCell"/>
</dbReference>
<dbReference type="GO" id="GO:0098978">
    <property type="term" value="C:glutamatergic synapse"/>
    <property type="evidence" value="ECO:0000314"/>
    <property type="project" value="SynGO"/>
</dbReference>
<dbReference type="GO" id="GO:0043083">
    <property type="term" value="C:synaptic cleft"/>
    <property type="evidence" value="ECO:0007669"/>
    <property type="project" value="Ensembl"/>
</dbReference>
<dbReference type="GO" id="GO:0030133">
    <property type="term" value="C:transport vesicle"/>
    <property type="evidence" value="ECO:0007669"/>
    <property type="project" value="UniProtKB-SubCell"/>
</dbReference>
<dbReference type="GO" id="GO:0046872">
    <property type="term" value="F:metal ion binding"/>
    <property type="evidence" value="ECO:0007669"/>
    <property type="project" value="UniProtKB-KW"/>
</dbReference>
<dbReference type="GO" id="GO:0060385">
    <property type="term" value="P:axonogenesis involved in innervation"/>
    <property type="evidence" value="ECO:0000318"/>
    <property type="project" value="GO_Central"/>
</dbReference>
<dbReference type="GO" id="GO:0071333">
    <property type="term" value="P:cellular response to glucose stimulus"/>
    <property type="evidence" value="ECO:0007669"/>
    <property type="project" value="Ensembl"/>
</dbReference>
<dbReference type="GO" id="GO:0035865">
    <property type="term" value="P:cellular response to potassium ion"/>
    <property type="evidence" value="ECO:0007669"/>
    <property type="project" value="Ensembl"/>
</dbReference>
<dbReference type="GO" id="GO:0007417">
    <property type="term" value="P:central nervous system development"/>
    <property type="evidence" value="ECO:0000304"/>
    <property type="project" value="ProtInc"/>
</dbReference>
<dbReference type="GO" id="GO:0007268">
    <property type="term" value="P:chemical synaptic transmission"/>
    <property type="evidence" value="ECO:0000304"/>
    <property type="project" value="ProtInc"/>
</dbReference>
<dbReference type="GO" id="GO:0043653">
    <property type="term" value="P:mitochondrial fragmentation involved in apoptotic process"/>
    <property type="evidence" value="ECO:0007669"/>
    <property type="project" value="Ensembl"/>
</dbReference>
<dbReference type="GO" id="GO:0006839">
    <property type="term" value="P:mitochondrial transport"/>
    <property type="evidence" value="ECO:0007669"/>
    <property type="project" value="Ensembl"/>
</dbReference>
<dbReference type="GO" id="GO:0099645">
    <property type="term" value="P:neurotransmitter receptor localization to postsynaptic specialization membrane"/>
    <property type="evidence" value="ECO:0007669"/>
    <property type="project" value="Ensembl"/>
</dbReference>
<dbReference type="GO" id="GO:0097107">
    <property type="term" value="P:postsynaptic density assembly"/>
    <property type="evidence" value="ECO:0007669"/>
    <property type="project" value="Ensembl"/>
</dbReference>
<dbReference type="CDD" id="cd00152">
    <property type="entry name" value="PTX"/>
    <property type="match status" value="1"/>
</dbReference>
<dbReference type="FunFam" id="2.60.120.200:FF:000012">
    <property type="entry name" value="neuronal pentraxin receptor"/>
    <property type="match status" value="1"/>
</dbReference>
<dbReference type="Gene3D" id="2.60.120.200">
    <property type="match status" value="1"/>
</dbReference>
<dbReference type="InterPro" id="IPR013320">
    <property type="entry name" value="ConA-like_dom_sf"/>
</dbReference>
<dbReference type="InterPro" id="IPR051360">
    <property type="entry name" value="Neuronal_Pentraxin_Related"/>
</dbReference>
<dbReference type="InterPro" id="IPR030476">
    <property type="entry name" value="Pentaxin_CS"/>
</dbReference>
<dbReference type="InterPro" id="IPR001759">
    <property type="entry name" value="Pentraxin-related"/>
</dbReference>
<dbReference type="PANTHER" id="PTHR19277:SF24">
    <property type="entry name" value="NEURONAL PENTRAXIN-1"/>
    <property type="match status" value="1"/>
</dbReference>
<dbReference type="PANTHER" id="PTHR19277">
    <property type="entry name" value="PENTRAXIN"/>
    <property type="match status" value="1"/>
</dbReference>
<dbReference type="Pfam" id="PF00354">
    <property type="entry name" value="Pentaxin"/>
    <property type="match status" value="1"/>
</dbReference>
<dbReference type="PRINTS" id="PR00895">
    <property type="entry name" value="PENTAXIN"/>
</dbReference>
<dbReference type="SMART" id="SM00159">
    <property type="entry name" value="PTX"/>
    <property type="match status" value="1"/>
</dbReference>
<dbReference type="SUPFAM" id="SSF49899">
    <property type="entry name" value="Concanavalin A-like lectins/glucanases"/>
    <property type="match status" value="1"/>
</dbReference>
<dbReference type="PROSITE" id="PS00289">
    <property type="entry name" value="PTX_1"/>
    <property type="match status" value="1"/>
</dbReference>
<dbReference type="PROSITE" id="PS51828">
    <property type="entry name" value="PTX_2"/>
    <property type="match status" value="1"/>
</dbReference>
<feature type="signal peptide" evidence="3">
    <location>
        <begin position="1"/>
        <end position="22"/>
    </location>
</feature>
<feature type="chain" id="PRO_0000023547" description="Neuronal pentraxin-1">
    <location>
        <begin position="23"/>
        <end position="432"/>
    </location>
</feature>
<feature type="domain" description="Pentraxin (PTX)" evidence="4">
    <location>
        <begin position="226"/>
        <end position="428"/>
    </location>
</feature>
<feature type="region of interest" description="Disordered" evidence="5">
    <location>
        <begin position="90"/>
        <end position="122"/>
    </location>
</feature>
<feature type="binding site" evidence="1">
    <location>
        <position position="280"/>
    </location>
    <ligand>
        <name>Ca(2+)</name>
        <dbReference type="ChEBI" id="CHEBI:29108"/>
        <label>1</label>
    </ligand>
</feature>
<feature type="binding site" evidence="1">
    <location>
        <position position="358"/>
    </location>
    <ligand>
        <name>Ca(2+)</name>
        <dbReference type="ChEBI" id="CHEBI:29108"/>
        <label>1</label>
    </ligand>
</feature>
<feature type="binding site" evidence="4">
    <location>
        <position position="358"/>
    </location>
    <ligand>
        <name>Ca(2+)</name>
        <dbReference type="ChEBI" id="CHEBI:29108"/>
        <label>2</label>
    </ligand>
</feature>
<feature type="binding site" evidence="1">
    <location>
        <position position="359"/>
    </location>
    <ligand>
        <name>Ca(2+)</name>
        <dbReference type="ChEBI" id="CHEBI:29108"/>
        <label>1</label>
    </ligand>
</feature>
<feature type="binding site" evidence="1">
    <location>
        <position position="360"/>
    </location>
    <ligand>
        <name>Ca(2+)</name>
        <dbReference type="ChEBI" id="CHEBI:29108"/>
        <label>1</label>
    </ligand>
</feature>
<feature type="binding site" evidence="4">
    <location>
        <position position="360"/>
    </location>
    <ligand>
        <name>Ca(2+)</name>
        <dbReference type="ChEBI" id="CHEBI:29108"/>
        <label>2</label>
    </ligand>
</feature>
<feature type="binding site" evidence="4">
    <location>
        <position position="370"/>
    </location>
    <ligand>
        <name>Ca(2+)</name>
        <dbReference type="ChEBI" id="CHEBI:29108"/>
        <label>2</label>
    </ligand>
</feature>
<feature type="glycosylation site" description="N-linked (GlcNAc...) asparagine" evidence="3">
    <location>
        <position position="154"/>
    </location>
</feature>
<feature type="glycosylation site" description="N-linked (GlcNAc...) asparagine" evidence="3">
    <location>
        <position position="193"/>
    </location>
</feature>
<feature type="disulfide bond" evidence="4">
    <location>
        <begin position="256"/>
        <end position="316"/>
    </location>
</feature>
<feature type="sequence variant" id="VAR_087974" description="In SCA50; uncertain significance." evidence="7">
    <original>R</original>
    <variation>L</variation>
    <location>
        <position position="143"/>
    </location>
</feature>
<feature type="sequence variant" id="VAR_087975" description="In SCA50; uncertain significance; abolishes secretion; loss of multimerization ability." evidence="6">
    <original>E</original>
    <variation>G</variation>
    <location>
        <position position="327"/>
    </location>
</feature>
<feature type="sequence variant" id="VAR_087976" description="In SCA50." evidence="8">
    <original>Q</original>
    <variation>R</variation>
    <location>
        <position position="370"/>
    </location>
</feature>
<feature type="sequence variant" id="VAR_087977" description="In SCA50; does not affect secretion; does not affect multimerization; dbSNP:rs1466750124." evidence="6">
    <original>G</original>
    <variation>R</variation>
    <location>
        <position position="389"/>
    </location>
</feature>
<feature type="sequence conflict" description="In Ref. 1; AAC50727." evidence="9" ref="1">
    <location>
        <position position="7"/>
    </location>
</feature>
<feature type="sequence conflict" description="In Ref. 1; AAC50727." evidence="9" ref="1">
    <original>AGA</original>
    <variation>P</variation>
    <location>
        <begin position="20"/>
        <end position="22"/>
    </location>
</feature>
<feature type="sequence conflict" description="In Ref. 1; AAC50727." evidence="9" ref="1">
    <original>S</original>
    <variation>SN</variation>
    <location>
        <position position="57"/>
    </location>
</feature>
<feature type="sequence conflict" description="In Ref. 1; AAC50727." evidence="9" ref="1">
    <original>R</original>
    <variation>K</variation>
    <location>
        <position position="192"/>
    </location>
</feature>
<feature type="strand" evidence="10">
    <location>
        <begin position="228"/>
        <end position="232"/>
    </location>
</feature>
<feature type="strand" evidence="10">
    <location>
        <begin position="240"/>
        <end position="245"/>
    </location>
</feature>
<feature type="strand" evidence="10">
    <location>
        <begin position="250"/>
        <end position="260"/>
    </location>
</feature>
<feature type="strand" evidence="10">
    <location>
        <begin position="268"/>
        <end position="275"/>
    </location>
</feature>
<feature type="strand" evidence="10">
    <location>
        <begin position="278"/>
        <end position="286"/>
    </location>
</feature>
<feature type="strand" evidence="10">
    <location>
        <begin position="288"/>
        <end position="290"/>
    </location>
</feature>
<feature type="strand" evidence="10">
    <location>
        <begin position="293"/>
        <end position="296"/>
    </location>
</feature>
<feature type="strand" evidence="10">
    <location>
        <begin position="299"/>
        <end position="302"/>
    </location>
</feature>
<feature type="strand" evidence="10">
    <location>
        <begin position="309"/>
        <end position="311"/>
    </location>
</feature>
<feature type="strand" evidence="10">
    <location>
        <begin position="313"/>
        <end position="320"/>
    </location>
</feature>
<feature type="turn" evidence="10">
    <location>
        <begin position="321"/>
        <end position="324"/>
    </location>
</feature>
<feature type="strand" evidence="10">
    <location>
        <begin position="325"/>
        <end position="330"/>
    </location>
</feature>
<feature type="strand" evidence="10">
    <location>
        <begin position="333"/>
        <end position="338"/>
    </location>
</feature>
<feature type="strand" evidence="10">
    <location>
        <begin position="352"/>
        <end position="357"/>
    </location>
</feature>
<feature type="helix" evidence="10">
    <location>
        <begin position="368"/>
        <end position="370"/>
    </location>
</feature>
<feature type="strand" evidence="10">
    <location>
        <begin position="374"/>
        <end position="384"/>
    </location>
</feature>
<feature type="helix" evidence="10">
    <location>
        <begin position="388"/>
        <end position="395"/>
    </location>
</feature>
<feature type="strand" evidence="10">
    <location>
        <begin position="405"/>
        <end position="407"/>
    </location>
</feature>
<feature type="helix" evidence="10">
    <location>
        <begin position="411"/>
        <end position="413"/>
    </location>
</feature>
<feature type="strand" evidence="10">
    <location>
        <begin position="414"/>
        <end position="417"/>
    </location>
</feature>
<feature type="strand" evidence="10">
    <location>
        <begin position="421"/>
        <end position="424"/>
    </location>
</feature>
<gene>
    <name type="primary">NPTX1</name>
</gene>
<sequence>MPAGRAARTCALLALCLLGAGAQDFGPTRFICTSVPVDADMCAASVAAGGAEELRSSVLQLRETVLQQKETILSQKETIRELTAKLGRCESQSTLDPGAGEARAGGGRKQPGSGKNTMGDLSRTPAAETLSQLGQTLQSLKTRLENLEQYSRLNSSSQTNSLKDLLQSKIDELERQVLSRVNTLEEGKGGPRNDTEERVKIETALTSLHQRISELEKGQKDNRPGDKFQLTFPLRTNYMYAKVKKSLPEMYAFTVCMWLKSSATPGVGTPFSYAVPGQANELVLIEWGNNPMEILINDKVAKLPFVINDGKWHHICVTWTTRDGVWEAYQDGTQGGSGENLAPYHPIKPQGVLVLGQEQDTLGGGFDATQAFVGELAHFNIWDRKLTPGEVYNLATCSTKALSGNVIAWAESHIEIYGGATKWTFEACRQIN</sequence>
<protein>
    <recommendedName>
        <fullName>Neuronal pentraxin-1</fullName>
        <shortName>NP1</shortName>
    </recommendedName>
    <alternativeName>
        <fullName>Neuronal pentraxin I</fullName>
        <shortName>NP-I</shortName>
    </alternativeName>
</protein>
<proteinExistence type="evidence at protein level"/>
<accession>Q15818</accession>
<accession>B3KXH3</accession>
<accession>Q5FWE6</accession>
<reference key="1">
    <citation type="journal article" date="1996" name="Genomics">
        <title>Mouse and human neuronal pentraxin 1 (NPTX1): conservation, genomic structure, and chromosomal localization.</title>
        <authorList>
            <person name="Omeis I.A."/>
            <person name="Hsu Y.-C."/>
            <person name="Perin M.S."/>
        </authorList>
    </citation>
    <scope>NUCLEOTIDE SEQUENCE [MRNA]</scope>
</reference>
<reference key="2">
    <citation type="journal article" date="2004" name="Nat. Genet.">
        <title>Complete sequencing and characterization of 21,243 full-length human cDNAs.</title>
        <authorList>
            <person name="Ota T."/>
            <person name="Suzuki Y."/>
            <person name="Nishikawa T."/>
            <person name="Otsuki T."/>
            <person name="Sugiyama T."/>
            <person name="Irie R."/>
            <person name="Wakamatsu A."/>
            <person name="Hayashi K."/>
            <person name="Sato H."/>
            <person name="Nagai K."/>
            <person name="Kimura K."/>
            <person name="Makita H."/>
            <person name="Sekine M."/>
            <person name="Obayashi M."/>
            <person name="Nishi T."/>
            <person name="Shibahara T."/>
            <person name="Tanaka T."/>
            <person name="Ishii S."/>
            <person name="Yamamoto J."/>
            <person name="Saito K."/>
            <person name="Kawai Y."/>
            <person name="Isono Y."/>
            <person name="Nakamura Y."/>
            <person name="Nagahari K."/>
            <person name="Murakami K."/>
            <person name="Yasuda T."/>
            <person name="Iwayanagi T."/>
            <person name="Wagatsuma M."/>
            <person name="Shiratori A."/>
            <person name="Sudo H."/>
            <person name="Hosoiri T."/>
            <person name="Kaku Y."/>
            <person name="Kodaira H."/>
            <person name="Kondo H."/>
            <person name="Sugawara M."/>
            <person name="Takahashi M."/>
            <person name="Kanda K."/>
            <person name="Yokoi T."/>
            <person name="Furuya T."/>
            <person name="Kikkawa E."/>
            <person name="Omura Y."/>
            <person name="Abe K."/>
            <person name="Kamihara K."/>
            <person name="Katsuta N."/>
            <person name="Sato K."/>
            <person name="Tanikawa M."/>
            <person name="Yamazaki M."/>
            <person name="Ninomiya K."/>
            <person name="Ishibashi T."/>
            <person name="Yamashita H."/>
            <person name="Murakawa K."/>
            <person name="Fujimori K."/>
            <person name="Tanai H."/>
            <person name="Kimata M."/>
            <person name="Watanabe M."/>
            <person name="Hiraoka S."/>
            <person name="Chiba Y."/>
            <person name="Ishida S."/>
            <person name="Ono Y."/>
            <person name="Takiguchi S."/>
            <person name="Watanabe S."/>
            <person name="Yosida M."/>
            <person name="Hotuta T."/>
            <person name="Kusano J."/>
            <person name="Kanehori K."/>
            <person name="Takahashi-Fujii A."/>
            <person name="Hara H."/>
            <person name="Tanase T.-O."/>
            <person name="Nomura Y."/>
            <person name="Togiya S."/>
            <person name="Komai F."/>
            <person name="Hara R."/>
            <person name="Takeuchi K."/>
            <person name="Arita M."/>
            <person name="Imose N."/>
            <person name="Musashino K."/>
            <person name="Yuuki H."/>
            <person name="Oshima A."/>
            <person name="Sasaki N."/>
            <person name="Aotsuka S."/>
            <person name="Yoshikawa Y."/>
            <person name="Matsunawa H."/>
            <person name="Ichihara T."/>
            <person name="Shiohata N."/>
            <person name="Sano S."/>
            <person name="Moriya S."/>
            <person name="Momiyama H."/>
            <person name="Satoh N."/>
            <person name="Takami S."/>
            <person name="Terashima Y."/>
            <person name="Suzuki O."/>
            <person name="Nakagawa S."/>
            <person name="Senoh A."/>
            <person name="Mizoguchi H."/>
            <person name="Goto Y."/>
            <person name="Shimizu F."/>
            <person name="Wakebe H."/>
            <person name="Hishigaki H."/>
            <person name="Watanabe T."/>
            <person name="Sugiyama A."/>
            <person name="Takemoto M."/>
            <person name="Kawakami B."/>
            <person name="Yamazaki M."/>
            <person name="Watanabe K."/>
            <person name="Kumagai A."/>
            <person name="Itakura S."/>
            <person name="Fukuzumi Y."/>
            <person name="Fujimori Y."/>
            <person name="Komiyama M."/>
            <person name="Tashiro H."/>
            <person name="Tanigami A."/>
            <person name="Fujiwara T."/>
            <person name="Ono T."/>
            <person name="Yamada K."/>
            <person name="Fujii Y."/>
            <person name="Ozaki K."/>
            <person name="Hirao M."/>
            <person name="Ohmori Y."/>
            <person name="Kawabata A."/>
            <person name="Hikiji T."/>
            <person name="Kobatake N."/>
            <person name="Inagaki H."/>
            <person name="Ikema Y."/>
            <person name="Okamoto S."/>
            <person name="Okitani R."/>
            <person name="Kawakami T."/>
            <person name="Noguchi S."/>
            <person name="Itoh T."/>
            <person name="Shigeta K."/>
            <person name="Senba T."/>
            <person name="Matsumura K."/>
            <person name="Nakajima Y."/>
            <person name="Mizuno T."/>
            <person name="Morinaga M."/>
            <person name="Sasaki M."/>
            <person name="Togashi T."/>
            <person name="Oyama M."/>
            <person name="Hata H."/>
            <person name="Watanabe M."/>
            <person name="Komatsu T."/>
            <person name="Mizushima-Sugano J."/>
            <person name="Satoh T."/>
            <person name="Shirai Y."/>
            <person name="Takahashi Y."/>
            <person name="Nakagawa K."/>
            <person name="Okumura K."/>
            <person name="Nagase T."/>
            <person name="Nomura N."/>
            <person name="Kikuchi H."/>
            <person name="Masuho Y."/>
            <person name="Yamashita R."/>
            <person name="Nakai K."/>
            <person name="Yada T."/>
            <person name="Nakamura Y."/>
            <person name="Ohara O."/>
            <person name="Isogai T."/>
            <person name="Sugano S."/>
        </authorList>
    </citation>
    <scope>NUCLEOTIDE SEQUENCE [LARGE SCALE MRNA]</scope>
    <source>
        <tissue>Hippocampus</tissue>
    </source>
</reference>
<reference key="3">
    <citation type="journal article" date="2004" name="Genome Res.">
        <title>The status, quality, and expansion of the NIH full-length cDNA project: the Mammalian Gene Collection (MGC).</title>
        <authorList>
            <consortium name="The MGC Project Team"/>
        </authorList>
    </citation>
    <scope>NUCLEOTIDE SEQUENCE [LARGE SCALE MRNA]</scope>
    <source>
        <tissue>Chondrosarcoma</tissue>
    </source>
</reference>
<reference key="4">
    <citation type="journal article" date="2022" name="Brain">
        <title>NPTX1 mutations trigger endoplasmic reticulum stress and cause autosomal dominant cerebellar ataxia.</title>
        <authorList>
            <person name="Coutelier M."/>
            <person name="Jacoupy M."/>
            <person name="Janer A."/>
            <person name="Renaud F."/>
            <person name="Auger N."/>
            <person name="Saripella G.V."/>
            <person name="Ancien F."/>
            <person name="Pucci F."/>
            <person name="Rooman M."/>
            <person name="Gilis D."/>
            <person name="Lariviere R."/>
            <person name="Sgarioto N."/>
            <person name="Valter R."/>
            <person name="Guillot-Noel L."/>
            <person name="Le Ber I."/>
            <person name="Sayah S."/>
            <person name="Charles P."/>
            <person name="Nuemann A."/>
            <person name="Pauly M.G."/>
            <person name="Helmchen C."/>
            <person name="Deininger N."/>
            <person name="Haack T.B."/>
            <person name="Brais B."/>
            <person name="Brice A."/>
            <person name="Tregouet D.A."/>
            <person name="El Hachimi K.H."/>
            <person name="Shoubridge E.A."/>
            <person name="Durr A."/>
            <person name="Stevanin G."/>
        </authorList>
    </citation>
    <scope>INVOLVEMENT IN SCA50</scope>
    <scope>VARIANTS SCA50 GLY-327 AND ARG-389</scope>
    <scope>CHARACTERIZATION OF VARIANTS SCA50 GLY-327 AND ARG-389</scope>
    <scope>SUBCELLULAR LOCATION</scope>
</reference>
<reference key="5">
    <citation type="journal article" date="2022" name="Mov. Disord.">
        <title>A Novel NPTX1 de novo Variant in a Late-Onset Ataxia Patient.</title>
        <authorList>
            <person name="Deppe J."/>
            <person name="Deininger N."/>
            <person name="Lingor P."/>
            <person name="Haack T.B."/>
            <person name="Haslinger B."/>
            <person name="Deschauer M."/>
        </authorList>
    </citation>
    <scope>VARIANT SCA50 LEU-143</scope>
</reference>
<reference key="6">
    <citation type="journal article" date="2022" name="Mov. Disord.">
        <title>A De Novo Missense NPTX1 Variant in an Individual with Infantile-Onset Cerebellar Ataxia.</title>
        <authorList>
            <person name="Schoeggl J."/>
            <person name="Siegert S."/>
            <person name="Boltshauser E."/>
            <person name="Freilinger M."/>
            <person name="Schmidt W.M."/>
        </authorList>
    </citation>
    <scope>VARIANT SCA50 ARG-370</scope>
</reference>
<name>NPTX1_HUMAN</name>
<comment type="function">
    <text evidence="2">May be involved in mediating uptake of synaptic material during synapse remodeling or in mediating the synaptic clustering of AMPA glutamate receptors at a subset of excitatory synapses.</text>
</comment>
<comment type="cofactor">
    <cofactor evidence="1">
        <name>Ca(2+)</name>
        <dbReference type="ChEBI" id="CHEBI:29108"/>
    </cofactor>
    <text evidence="1">Binds 2 calcium ions per subunit.</text>
</comment>
<comment type="subunit">
    <text evidence="2">Homooligomer or heterooligomer (probably pentamer) with neuronal pentraxin receptor (NPTXR).</text>
</comment>
<comment type="subcellular location">
    <subcellularLocation>
        <location evidence="6">Secreted</location>
    </subcellularLocation>
    <subcellularLocation>
        <location evidence="6 9">Cytoplasmic vesicle</location>
        <location evidence="6 9">Secretory vesicle</location>
    </subcellularLocation>
    <subcellularLocation>
        <location evidence="6 9">Endoplasmic reticulum</location>
    </subcellularLocation>
</comment>
<comment type="disease" evidence="6 7 8">
    <disease id="DI-06566">
        <name>Spinocerebellar ataxia 50</name>
        <acronym>SCA50</acronym>
        <description>A form of spinocerebellar ataxia, a clinically and genetically heterogeneous group of cerebellar disorders. Patients show progressive incoordination of gait and often poor coordination of hands, speech and eye movements, due to degeneration of the cerebellum with variable involvement of the brainstem and spinal cord. SCA50 is an autosomal dominant form characterized by cerebellar ataxia, oculomotor apraxia and other eye movement abnormalities, and cerebellar atrophy on brain imaging.</description>
        <dbReference type="MIM" id="620158"/>
    </disease>
    <text>The disease is caused by variants affecting the gene represented in this entry.</text>
</comment>
<keyword id="KW-0002">3D-structure</keyword>
<keyword id="KW-0106">Calcium</keyword>
<keyword id="KW-0968">Cytoplasmic vesicle</keyword>
<keyword id="KW-0225">Disease variant</keyword>
<keyword id="KW-1015">Disulfide bond</keyword>
<keyword id="KW-0256">Endoplasmic reticulum</keyword>
<keyword id="KW-0325">Glycoprotein</keyword>
<keyword id="KW-0479">Metal-binding</keyword>
<keyword id="KW-0523">Neurodegeneration</keyword>
<keyword id="KW-1267">Proteomics identification</keyword>
<keyword id="KW-1185">Reference proteome</keyword>
<keyword id="KW-0964">Secreted</keyword>
<keyword id="KW-0732">Signal</keyword>
<keyword id="KW-0950">Spinocerebellar ataxia</keyword>
<evidence type="ECO:0000250" key="1"/>
<evidence type="ECO:0000250" key="2">
    <source>
        <dbReference type="UniProtKB" id="P47971"/>
    </source>
</evidence>
<evidence type="ECO:0000255" key="3"/>
<evidence type="ECO:0000255" key="4">
    <source>
        <dbReference type="PROSITE-ProRule" id="PRU01172"/>
    </source>
</evidence>
<evidence type="ECO:0000256" key="5">
    <source>
        <dbReference type="SAM" id="MobiDB-lite"/>
    </source>
</evidence>
<evidence type="ECO:0000269" key="6">
    <source>
    </source>
</evidence>
<evidence type="ECO:0000269" key="7">
    <source>
    </source>
</evidence>
<evidence type="ECO:0000269" key="8">
    <source>
    </source>
</evidence>
<evidence type="ECO:0000305" key="9"/>
<evidence type="ECO:0007829" key="10">
    <source>
        <dbReference type="PDB" id="6YPE"/>
    </source>
</evidence>